<sequence length="274" mass="28929">MTKIWFITGSSRGLGLAIAEAALNNGDSVIATARKPEQLTNLVNKFGKERVFPVALDVTDNNQVLQAVKSGHEKFGRIDVVINNAGYANTAAVEDIDVDDFCAQVEANLMGVVYVSKAVLPILRQQKSGHIFQVSSLGGRIGAPGLSAYQSAKWAVGGFSTVLAQEVASFGIKITVLEPGGIRTDWAGSSMQVPTVSEPYQATVGAFAESLRKSSGSEVSIPSKIANIVLKVLGEKEPPLRLLVGPDAVEYAGKAAEVLSASDEKWRELSLASA</sequence>
<name>BOA17_BOTFB</name>
<evidence type="ECO:0000250" key="1">
    <source>
        <dbReference type="UniProtKB" id="L0E2Z4"/>
    </source>
</evidence>
<evidence type="ECO:0000250" key="2">
    <source>
        <dbReference type="UniProtKB" id="O93868"/>
    </source>
</evidence>
<evidence type="ECO:0000269" key="3">
    <source>
    </source>
</evidence>
<evidence type="ECO:0000269" key="4">
    <source>
    </source>
</evidence>
<evidence type="ECO:0000303" key="5">
    <source>
    </source>
</evidence>
<evidence type="ECO:0000305" key="6"/>
<evidence type="ECO:0000305" key="7">
    <source>
    </source>
</evidence>
<evidence type="ECO:0000305" key="8">
    <source>
    </source>
</evidence>
<accession>A6SSW9</accession>
<comment type="function">
    <text evidence="3 4 8">Oxidoreductase; part of the gene cluster B that mediates the biosynthesis of botcinic acid and its botcinin derivatives, acetate-derived polyketides that contribute to virulence when combined with the sesquiterpene botrydial (PubMed:21722295). Botcinic acid and its derivatives have been shown to induce chlorosis and necrosis during host plant infection, but also have antifungal activities (PubMed:21722295). Two polyketide synthases, BOA6 and BOA9, are involved in the biosynthesis of botcinins. BOA6 mediates the formation of the per-methylated tetraketide core by condensation of four units of malonyl-CoA with one unit of acetyl-CoA, which would be methylated in activated methylene groups to yield a bicyclic acid intermediate that could then either be converted to botrylactone derivatives or lose the starter acetate unit through a retro-Claisen type C-C bond cleavage to yield botcinin derivatives (PubMed:23203902). The second polyketide synthase, BOA9, is probably required for the biosynthesis of the tetraketide side chain of botcinins (Probable). The methyltransferase (MT) domain within BOA6 is probably responsible for the incorporation of four methyl groups (Probable). The trans-enoyl reductase BOA5 might take over the enoyl reductase function of BOA6 that misses an ER domain (Probable). The monooxygenases BOA2, BOA3 and BOA4 might be involved in further hydroxylations at C4, C5 and C8, whereas BOA7, close to BOA9, could potentially be involved in the hydroxylation at C4 in the side chain of botcinins (Probable).</text>
</comment>
<comment type="pathway">
    <text evidence="7">Polyketide biosynthesis.</text>
</comment>
<comment type="induction">
    <text evidence="3">Expression of the botcinic acid clusters genes BOA1-13 and BOA17 is coregulated by BCG1 during both in vitro and in planta growth.</text>
</comment>
<comment type="similarity">
    <text evidence="6">Belongs to the short-chain dehydrogenases/reductases (SDR) family.</text>
</comment>
<protein>
    <recommendedName>
        <fullName evidence="5">Oxidoreductase BOA17</fullName>
        <ecNumber evidence="7">1.-.-.-</ecNumber>
    </recommendedName>
    <alternativeName>
        <fullName evidence="5">Botcinic acid biosynthesis cluster B protein 17</fullName>
    </alternativeName>
</protein>
<gene>
    <name evidence="5" type="primary">BOA17</name>
</gene>
<feature type="chain" id="PRO_0000444654" description="Oxidoreductase BOA17">
    <location>
        <begin position="1"/>
        <end position="274"/>
    </location>
</feature>
<feature type="active site" description="Proton donor" evidence="2">
    <location>
        <position position="135"/>
    </location>
</feature>
<feature type="active site" description="Proton donor" evidence="2">
    <location>
        <position position="149"/>
    </location>
</feature>
<feature type="active site" description="Lowers pKa of active site Tyr" evidence="2">
    <location>
        <position position="153"/>
    </location>
</feature>
<feature type="binding site" evidence="1">
    <location>
        <position position="14"/>
    </location>
    <ligand>
        <name>NADP(+)</name>
        <dbReference type="ChEBI" id="CHEBI:58349"/>
    </ligand>
</feature>
<feature type="binding site" evidence="1">
    <location>
        <position position="32"/>
    </location>
    <ligand>
        <name>NADP(+)</name>
        <dbReference type="ChEBI" id="CHEBI:58349"/>
    </ligand>
</feature>
<feature type="binding site" evidence="1">
    <location>
        <position position="57"/>
    </location>
    <ligand>
        <name>NADP(+)</name>
        <dbReference type="ChEBI" id="CHEBI:58349"/>
    </ligand>
</feature>
<feature type="binding site" evidence="2">
    <location>
        <position position="84"/>
    </location>
    <ligand>
        <name>NADP(+)</name>
        <dbReference type="ChEBI" id="CHEBI:58349"/>
    </ligand>
</feature>
<feature type="binding site" evidence="1">
    <location>
        <position position="117"/>
    </location>
    <ligand>
        <name>NADP(+)</name>
        <dbReference type="ChEBI" id="CHEBI:58349"/>
    </ligand>
</feature>
<feature type="binding site" evidence="2">
    <location>
        <position position="149"/>
    </location>
    <ligand>
        <name>NADP(+)</name>
        <dbReference type="ChEBI" id="CHEBI:58349"/>
    </ligand>
</feature>
<feature type="binding site" evidence="2">
    <location>
        <position position="153"/>
    </location>
    <ligand>
        <name>NADP(+)</name>
        <dbReference type="ChEBI" id="CHEBI:58349"/>
    </ligand>
</feature>
<feature type="binding site" evidence="2">
    <location>
        <position position="182"/>
    </location>
    <ligand>
        <name>NADP(+)</name>
        <dbReference type="ChEBI" id="CHEBI:58349"/>
    </ligand>
</feature>
<feature type="binding site" evidence="1">
    <location>
        <position position="184"/>
    </location>
    <ligand>
        <name>NADP(+)</name>
        <dbReference type="ChEBI" id="CHEBI:58349"/>
    </ligand>
</feature>
<proteinExistence type="evidence at transcript level"/>
<keyword id="KW-0521">NADP</keyword>
<keyword id="KW-0560">Oxidoreductase</keyword>
<keyword id="KW-0843">Virulence</keyword>
<reference key="1">
    <citation type="journal article" date="2011" name="Mol. Plant Pathol.">
        <title>The Botrytis cinerea phytotoxin botcinic acid requires two polyketide synthases for production and has a redundant role in virulence with botrydial.</title>
        <authorList>
            <person name="Dalmais B."/>
            <person name="Schumacher J."/>
            <person name="Moraga J."/>
            <person name="Le Pecheur P."/>
            <person name="Tudzynski B."/>
            <person name="Collado I.G."/>
            <person name="Viaud M."/>
        </authorList>
    </citation>
    <scope>NUCLEOTIDE SEQUENCE [GENOMIC DNA]</scope>
    <scope>FUNCTION</scope>
    <scope>INDUCTION</scope>
    <scope>PATHWAY</scope>
    <source>
        <strain>B05.10</strain>
    </source>
</reference>
<reference key="2">
    <citation type="journal article" date="2013" name="ChemBioChem">
        <title>A shared biosynthetic pathway for botcinins and botrylactones revealed through gene deletions.</title>
        <authorList>
            <person name="Massaroli M."/>
            <person name="Moraga J."/>
            <person name="Bastos Borges K."/>
            <person name="Ramirez-Fernandez J."/>
            <person name="Viaud M."/>
            <person name="Gonzalez Collado I."/>
            <person name="Duran-Patron R."/>
            <person name="Hernandez-Galan R."/>
        </authorList>
    </citation>
    <scope>FUNCTION</scope>
</reference>
<dbReference type="EC" id="1.-.-.-" evidence="7"/>
<dbReference type="EMBL" id="FR718886">
    <property type="protein sequence ID" value="CBX87040.1"/>
    <property type="molecule type" value="Genomic_DNA"/>
</dbReference>
<dbReference type="SMR" id="A6SSW9"/>
<dbReference type="EnsemblFungi" id="Bcin01g00160.1">
    <property type="protein sequence ID" value="Bcin01p00160.1"/>
    <property type="gene ID" value="Bcin01g00160"/>
</dbReference>
<dbReference type="KEGG" id="bfu:BCIN_01g00160"/>
<dbReference type="VEuPathDB" id="FungiDB:Bcin01g00160"/>
<dbReference type="OMA" id="MARIWFV"/>
<dbReference type="OrthoDB" id="1274115at2759"/>
<dbReference type="GO" id="GO:0016491">
    <property type="term" value="F:oxidoreductase activity"/>
    <property type="evidence" value="ECO:0007669"/>
    <property type="project" value="UniProtKB-KW"/>
</dbReference>
<dbReference type="CDD" id="cd05374">
    <property type="entry name" value="17beta-HSD-like_SDR_c"/>
    <property type="match status" value="1"/>
</dbReference>
<dbReference type="Gene3D" id="3.40.50.720">
    <property type="entry name" value="NAD(P)-binding Rossmann-like Domain"/>
    <property type="match status" value="1"/>
</dbReference>
<dbReference type="InterPro" id="IPR036291">
    <property type="entry name" value="NAD(P)-bd_dom_sf"/>
</dbReference>
<dbReference type="InterPro" id="IPR002347">
    <property type="entry name" value="SDR_fam"/>
</dbReference>
<dbReference type="InterPro" id="IPR051911">
    <property type="entry name" value="SDR_oxidoreductase"/>
</dbReference>
<dbReference type="NCBIfam" id="NF006114">
    <property type="entry name" value="PRK08263.1"/>
    <property type="match status" value="1"/>
</dbReference>
<dbReference type="PANTHER" id="PTHR43976">
    <property type="entry name" value="SHORT CHAIN DEHYDROGENASE"/>
    <property type="match status" value="1"/>
</dbReference>
<dbReference type="PANTHER" id="PTHR43976:SF16">
    <property type="entry name" value="SHORT-CHAIN DEHYDROGENASE_REDUCTASE FAMILY PROTEIN"/>
    <property type="match status" value="1"/>
</dbReference>
<dbReference type="Pfam" id="PF00106">
    <property type="entry name" value="adh_short"/>
    <property type="match status" value="1"/>
</dbReference>
<dbReference type="PRINTS" id="PR00081">
    <property type="entry name" value="GDHRDH"/>
</dbReference>
<dbReference type="PRINTS" id="PR00080">
    <property type="entry name" value="SDRFAMILY"/>
</dbReference>
<dbReference type="SMART" id="SM00822">
    <property type="entry name" value="PKS_KR"/>
    <property type="match status" value="1"/>
</dbReference>
<dbReference type="SUPFAM" id="SSF51735">
    <property type="entry name" value="NAD(P)-binding Rossmann-fold domains"/>
    <property type="match status" value="1"/>
</dbReference>
<organism>
    <name type="scientific">Botryotinia fuckeliana (strain B05.10)</name>
    <name type="common">Noble rot fungus</name>
    <name type="synonym">Botrytis cinerea</name>
    <dbReference type="NCBI Taxonomy" id="332648"/>
    <lineage>
        <taxon>Eukaryota</taxon>
        <taxon>Fungi</taxon>
        <taxon>Dikarya</taxon>
        <taxon>Ascomycota</taxon>
        <taxon>Pezizomycotina</taxon>
        <taxon>Leotiomycetes</taxon>
        <taxon>Helotiales</taxon>
        <taxon>Sclerotiniaceae</taxon>
        <taxon>Botrytis</taxon>
    </lineage>
</organism>